<sequence>MDLASLRAQQIELASSVCREDRLDKDPPAFIGGADVGFEQGGEVTRAAMVLLKYPSLELVEYKVARIATTMPYIPGFLSFREYPALLAAWEQLSQKPDLLFVDGHGISHPRRLGVASHFGLLVDVPTIGVAKKRLCGKFEPLSAEPGALSPLMDKGEQLAWVWRSKARCNPLFIATGHRVSTDSALAWVQRCMKGYRLPEPTRWADAVASGRPAFVRWQEIQR</sequence>
<gene>
    <name evidence="1" type="primary">nfi</name>
    <name type="ordered locus">STM4168</name>
    <name type="ORF">STMF1.22</name>
</gene>
<name>NFI_SALTY</name>
<evidence type="ECO:0000255" key="1">
    <source>
        <dbReference type="HAMAP-Rule" id="MF_00801"/>
    </source>
</evidence>
<keyword id="KW-0963">Cytoplasm</keyword>
<keyword id="KW-0227">DNA damage</keyword>
<keyword id="KW-0234">DNA repair</keyword>
<keyword id="KW-0255">Endonuclease</keyword>
<keyword id="KW-0378">Hydrolase</keyword>
<keyword id="KW-0460">Magnesium</keyword>
<keyword id="KW-0479">Metal-binding</keyword>
<keyword id="KW-0540">Nuclease</keyword>
<keyword id="KW-1185">Reference proteome</keyword>
<feature type="chain" id="PRO_0000159670" description="Endonuclease V">
    <location>
        <begin position="1"/>
        <end position="223"/>
    </location>
</feature>
<feature type="binding site" evidence="1">
    <location>
        <position position="35"/>
    </location>
    <ligand>
        <name>Mg(2+)</name>
        <dbReference type="ChEBI" id="CHEBI:18420"/>
    </ligand>
</feature>
<feature type="binding site" evidence="1">
    <location>
        <position position="103"/>
    </location>
    <ligand>
        <name>Mg(2+)</name>
        <dbReference type="ChEBI" id="CHEBI:18420"/>
    </ligand>
</feature>
<feature type="site" description="Interaction with target DNA" evidence="1">
    <location>
        <position position="73"/>
    </location>
</feature>
<protein>
    <recommendedName>
        <fullName evidence="1">Endonuclease V</fullName>
        <ecNumber evidence="1">3.1.21.7</ecNumber>
    </recommendedName>
    <alternativeName>
        <fullName evidence="1">Deoxyinosine 3'endonuclease</fullName>
    </alternativeName>
    <alternativeName>
        <fullName evidence="1">Deoxyribonuclease V</fullName>
        <shortName evidence="1">DNase V</shortName>
    </alternativeName>
</protein>
<comment type="function">
    <text evidence="1">DNA repair enzyme involved in the repair of deaminated bases. Selectively cleaves double-stranded DNA at the second phosphodiester bond 3' to a deoxyinosine leaving behind the intact lesion on the nicked DNA.</text>
</comment>
<comment type="catalytic activity">
    <reaction evidence="1">
        <text>Endonucleolytic cleavage at apurinic or apyrimidinic sites to products with a 5'-phosphate.</text>
        <dbReference type="EC" id="3.1.21.7"/>
    </reaction>
</comment>
<comment type="cofactor">
    <cofactor evidence="1">
        <name>Mg(2+)</name>
        <dbReference type="ChEBI" id="CHEBI:18420"/>
    </cofactor>
</comment>
<comment type="subcellular location">
    <subcellularLocation>
        <location evidence="1">Cytoplasm</location>
    </subcellularLocation>
</comment>
<comment type="similarity">
    <text evidence="1">Belongs to the endonuclease V family.</text>
</comment>
<proteinExistence type="inferred from homology"/>
<organism>
    <name type="scientific">Salmonella typhimurium (strain LT2 / SGSC1412 / ATCC 700720)</name>
    <dbReference type="NCBI Taxonomy" id="99287"/>
    <lineage>
        <taxon>Bacteria</taxon>
        <taxon>Pseudomonadati</taxon>
        <taxon>Pseudomonadota</taxon>
        <taxon>Gammaproteobacteria</taxon>
        <taxon>Enterobacterales</taxon>
        <taxon>Enterobacteriaceae</taxon>
        <taxon>Salmonella</taxon>
    </lineage>
</organism>
<reference key="1">
    <citation type="journal article" date="2001" name="Nature">
        <title>Complete genome sequence of Salmonella enterica serovar Typhimurium LT2.</title>
        <authorList>
            <person name="McClelland M."/>
            <person name="Sanderson K.E."/>
            <person name="Spieth J."/>
            <person name="Clifton S.W."/>
            <person name="Latreille P."/>
            <person name="Courtney L."/>
            <person name="Porwollik S."/>
            <person name="Ali J."/>
            <person name="Dante M."/>
            <person name="Du F."/>
            <person name="Hou S."/>
            <person name="Layman D."/>
            <person name="Leonard S."/>
            <person name="Nguyen C."/>
            <person name="Scott K."/>
            <person name="Holmes A."/>
            <person name="Grewal N."/>
            <person name="Mulvaney E."/>
            <person name="Ryan E."/>
            <person name="Sun H."/>
            <person name="Florea L."/>
            <person name="Miller W."/>
            <person name="Stoneking T."/>
            <person name="Nhan M."/>
            <person name="Waterston R."/>
            <person name="Wilson R.K."/>
        </authorList>
    </citation>
    <scope>NUCLEOTIDE SEQUENCE [LARGE SCALE GENOMIC DNA]</scope>
    <source>
        <strain>LT2 / SGSC1412 / ATCC 700720</strain>
    </source>
</reference>
<accession>P68738</accession>
<accession>Q9L9I3</accession>
<dbReference type="EC" id="3.1.21.7" evidence="1"/>
<dbReference type="EMBL" id="AF170176">
    <property type="protein sequence ID" value="AAF33502.1"/>
    <property type="molecule type" value="Genomic_DNA"/>
</dbReference>
<dbReference type="EMBL" id="AE006468">
    <property type="protein sequence ID" value="AAL22996.1"/>
    <property type="molecule type" value="Genomic_DNA"/>
</dbReference>
<dbReference type="RefSeq" id="NP_463037.1">
    <property type="nucleotide sequence ID" value="NC_003197.2"/>
</dbReference>
<dbReference type="RefSeq" id="WP_000362359.1">
    <property type="nucleotide sequence ID" value="NC_003197.2"/>
</dbReference>
<dbReference type="SMR" id="P68738"/>
<dbReference type="STRING" id="99287.STM4168"/>
<dbReference type="PaxDb" id="99287-STM4168"/>
<dbReference type="DNASU" id="1255694"/>
<dbReference type="GeneID" id="1255694"/>
<dbReference type="KEGG" id="stm:STM4168"/>
<dbReference type="PATRIC" id="fig|99287.12.peg.4382"/>
<dbReference type="HOGENOM" id="CLU_047631_1_0_6"/>
<dbReference type="OMA" id="NACAHTL"/>
<dbReference type="PhylomeDB" id="P68738"/>
<dbReference type="BioCyc" id="SENT99287:STM4168-MONOMER"/>
<dbReference type="Proteomes" id="UP000001014">
    <property type="component" value="Chromosome"/>
</dbReference>
<dbReference type="GO" id="GO:0005737">
    <property type="term" value="C:cytoplasm"/>
    <property type="evidence" value="ECO:0007669"/>
    <property type="project" value="UniProtKB-SubCell"/>
</dbReference>
<dbReference type="GO" id="GO:0043737">
    <property type="term" value="F:deoxyribonuclease V activity"/>
    <property type="evidence" value="ECO:0000318"/>
    <property type="project" value="GO_Central"/>
</dbReference>
<dbReference type="GO" id="GO:0000287">
    <property type="term" value="F:magnesium ion binding"/>
    <property type="evidence" value="ECO:0007669"/>
    <property type="project" value="UniProtKB-UniRule"/>
</dbReference>
<dbReference type="GO" id="GO:0016891">
    <property type="term" value="F:RNA endonuclease activity, producing 5'-phosphomonoesters"/>
    <property type="evidence" value="ECO:0000318"/>
    <property type="project" value="GO_Central"/>
</dbReference>
<dbReference type="GO" id="GO:0003727">
    <property type="term" value="F:single-stranded RNA binding"/>
    <property type="evidence" value="ECO:0000318"/>
    <property type="project" value="GO_Central"/>
</dbReference>
<dbReference type="GO" id="GO:0006281">
    <property type="term" value="P:DNA repair"/>
    <property type="evidence" value="ECO:0007669"/>
    <property type="project" value="UniProtKB-UniRule"/>
</dbReference>
<dbReference type="CDD" id="cd06559">
    <property type="entry name" value="Endonuclease_V"/>
    <property type="match status" value="1"/>
</dbReference>
<dbReference type="FunFam" id="3.30.2170.10:FF:000001">
    <property type="entry name" value="Endonuclease V"/>
    <property type="match status" value="1"/>
</dbReference>
<dbReference type="Gene3D" id="3.30.2170.10">
    <property type="entry name" value="archaeoglobus fulgidus dsm 4304 superfamily"/>
    <property type="match status" value="1"/>
</dbReference>
<dbReference type="HAMAP" id="MF_00801">
    <property type="entry name" value="Endonuclease_5"/>
    <property type="match status" value="1"/>
</dbReference>
<dbReference type="InterPro" id="IPR007581">
    <property type="entry name" value="Endonuclease-V"/>
</dbReference>
<dbReference type="NCBIfam" id="NF008629">
    <property type="entry name" value="PRK11617.1"/>
    <property type="match status" value="1"/>
</dbReference>
<dbReference type="PANTHER" id="PTHR28511">
    <property type="entry name" value="ENDONUCLEASE V"/>
    <property type="match status" value="1"/>
</dbReference>
<dbReference type="PANTHER" id="PTHR28511:SF1">
    <property type="entry name" value="ENDONUCLEASE V"/>
    <property type="match status" value="1"/>
</dbReference>
<dbReference type="Pfam" id="PF04493">
    <property type="entry name" value="Endonuclease_5"/>
    <property type="match status" value="1"/>
</dbReference>